<dbReference type="GO" id="GO:0005576">
    <property type="term" value="C:extracellular region"/>
    <property type="evidence" value="ECO:0007669"/>
    <property type="project" value="UniProtKB-SubCell"/>
</dbReference>
<evidence type="ECO:0000269" key="1">
    <source>
    </source>
</evidence>
<reference key="1">
    <citation type="journal article" date="2010" name="FEBS J.">
        <title>Comparison of functional properties of two fungal antifreeze proteins from Antarctomyces psychrotrophicus and Typhula ishikariensis.</title>
        <authorList>
            <person name="Xiao N."/>
            <person name="Suzuki K."/>
            <person name="Nishimiya Y."/>
            <person name="Kondo H."/>
            <person name="Miura A."/>
            <person name="Tsuda S."/>
            <person name="Hoshino T."/>
        </authorList>
    </citation>
    <scope>PROTEIN SEQUENCE</scope>
    <scope>FUNCTION</scope>
    <scope>BIOPHYSICOCHEMICAL PROPERTIES</scope>
    <scope>SUBCELLULAR LOCATION</scope>
    <scope>INDUCTION</scope>
    <scope>GLYCOSYLATION</scope>
    <scope>MASS SPECTROMETRY</scope>
    <source>
        <strain>KG-1</strain>
    </source>
</reference>
<keyword id="KW-0047">Antifreeze protein</keyword>
<keyword id="KW-0903">Direct protein sequencing</keyword>
<keyword id="KW-0325">Glycoprotein</keyword>
<keyword id="KW-0964">Secreted</keyword>
<keyword id="KW-0346">Stress response</keyword>
<name>ANTF_ANTPS</name>
<comment type="function">
    <text evidence="1">Antifreeze proteins bind to the surface of ice crystals and inhibit the growth of these crystals, this inhibition causes thermal hysteresis. Causes the shape of ice crystals to change from hexagonal to a bipyramidal shape with rugged facets. Inhibits recrystallization of ice crystals.</text>
</comment>
<comment type="biophysicochemical properties">
    <phDependence>
        <text evidence="1">Optimum pH is 9.3.</text>
    </phDependence>
</comment>
<comment type="subcellular location">
    <subcellularLocation>
        <location evidence="1">Secreted</location>
        <location evidence="1">Extracellular space</location>
    </subcellularLocation>
</comment>
<comment type="induction">
    <text evidence="1">By low temperature.</text>
</comment>
<comment type="PTM">
    <text evidence="1">N-glycosylated and O-glycosylated.</text>
</comment>
<comment type="mass spectrometry" mass="21742.49" method="MALDI" evidence="1"/>
<proteinExistence type="evidence at protein level"/>
<protein>
    <recommendedName>
        <fullName>Antifreeze protein</fullName>
        <shortName>AnpAFP</shortName>
    </recommendedName>
</protein>
<sequence length="20" mass="1848">AGLDLGAASXFGALAFEGVA</sequence>
<feature type="chain" id="PRO_0000373064" description="Antifreeze protein">
    <location>
        <begin position="1"/>
        <end position="20" status="greater than"/>
    </location>
</feature>
<feature type="non-terminal residue">
    <location>
        <position position="20"/>
    </location>
</feature>
<accession>P86268</accession>
<organism>
    <name type="scientific">Antarctomyces psychrotrophicus</name>
    <dbReference type="NCBI Taxonomy" id="89416"/>
    <lineage>
        <taxon>Eukaryota</taxon>
        <taxon>Fungi</taxon>
        <taxon>Dikarya</taxon>
        <taxon>Ascomycota</taxon>
        <taxon>Pezizomycotina</taxon>
        <taxon>Leotiomycetes</taxon>
        <taxon>Thelebolales</taxon>
        <taxon>Thelebolaceae</taxon>
        <taxon>Antarctomyces</taxon>
    </lineage>
</organism>